<reference key="1">
    <citation type="journal article" date="2008" name="Genome Res.">
        <title>Comparative genome analysis of Salmonella enteritidis PT4 and Salmonella gallinarum 287/91 provides insights into evolutionary and host adaptation pathways.</title>
        <authorList>
            <person name="Thomson N.R."/>
            <person name="Clayton D.J."/>
            <person name="Windhorst D."/>
            <person name="Vernikos G."/>
            <person name="Davidson S."/>
            <person name="Churcher C."/>
            <person name="Quail M.A."/>
            <person name="Stevens M."/>
            <person name="Jones M.A."/>
            <person name="Watson M."/>
            <person name="Barron A."/>
            <person name="Layton A."/>
            <person name="Pickard D."/>
            <person name="Kingsley R.A."/>
            <person name="Bignell A."/>
            <person name="Clark L."/>
            <person name="Harris B."/>
            <person name="Ormond D."/>
            <person name="Abdellah Z."/>
            <person name="Brooks K."/>
            <person name="Cherevach I."/>
            <person name="Chillingworth T."/>
            <person name="Woodward J."/>
            <person name="Norberczak H."/>
            <person name="Lord A."/>
            <person name="Arrowsmith C."/>
            <person name="Jagels K."/>
            <person name="Moule S."/>
            <person name="Mungall K."/>
            <person name="Saunders M."/>
            <person name="Whitehead S."/>
            <person name="Chabalgoity J.A."/>
            <person name="Maskell D."/>
            <person name="Humphreys T."/>
            <person name="Roberts M."/>
            <person name="Barrow P.A."/>
            <person name="Dougan G."/>
            <person name="Parkhill J."/>
        </authorList>
    </citation>
    <scope>NUCLEOTIDE SEQUENCE [LARGE SCALE GENOMIC DNA]</scope>
    <source>
        <strain>P125109</strain>
    </source>
</reference>
<evidence type="ECO:0000255" key="1">
    <source>
        <dbReference type="HAMAP-Rule" id="MF_01008"/>
    </source>
</evidence>
<evidence type="ECO:0000255" key="2">
    <source>
        <dbReference type="PROSITE-ProRule" id="PRU01076"/>
    </source>
</evidence>
<protein>
    <recommendedName>
        <fullName>Transcriptional regulator MraZ</fullName>
    </recommendedName>
</protein>
<dbReference type="EMBL" id="AM933172">
    <property type="protein sequence ID" value="CAR31709.1"/>
    <property type="molecule type" value="Genomic_DNA"/>
</dbReference>
<dbReference type="RefSeq" id="WP_000488294.1">
    <property type="nucleotide sequence ID" value="NC_011294.1"/>
</dbReference>
<dbReference type="SMR" id="B5R2L5"/>
<dbReference type="KEGG" id="set:SEN0120"/>
<dbReference type="HOGENOM" id="CLU_107907_2_0_6"/>
<dbReference type="Proteomes" id="UP000000613">
    <property type="component" value="Chromosome"/>
</dbReference>
<dbReference type="GO" id="GO:0005737">
    <property type="term" value="C:cytoplasm"/>
    <property type="evidence" value="ECO:0007669"/>
    <property type="project" value="UniProtKB-UniRule"/>
</dbReference>
<dbReference type="GO" id="GO:0009295">
    <property type="term" value="C:nucleoid"/>
    <property type="evidence" value="ECO:0007669"/>
    <property type="project" value="UniProtKB-SubCell"/>
</dbReference>
<dbReference type="GO" id="GO:0003700">
    <property type="term" value="F:DNA-binding transcription factor activity"/>
    <property type="evidence" value="ECO:0007669"/>
    <property type="project" value="UniProtKB-UniRule"/>
</dbReference>
<dbReference type="GO" id="GO:0000976">
    <property type="term" value="F:transcription cis-regulatory region binding"/>
    <property type="evidence" value="ECO:0007669"/>
    <property type="project" value="TreeGrafter"/>
</dbReference>
<dbReference type="GO" id="GO:2000143">
    <property type="term" value="P:negative regulation of DNA-templated transcription initiation"/>
    <property type="evidence" value="ECO:0007669"/>
    <property type="project" value="TreeGrafter"/>
</dbReference>
<dbReference type="CDD" id="cd16321">
    <property type="entry name" value="MraZ_C"/>
    <property type="match status" value="1"/>
</dbReference>
<dbReference type="CDD" id="cd16320">
    <property type="entry name" value="MraZ_N"/>
    <property type="match status" value="1"/>
</dbReference>
<dbReference type="FunFam" id="3.40.1550.20:FF:000001">
    <property type="entry name" value="Transcriptional regulator MraZ"/>
    <property type="match status" value="1"/>
</dbReference>
<dbReference type="Gene3D" id="3.40.1550.20">
    <property type="entry name" value="Transcriptional regulator MraZ domain"/>
    <property type="match status" value="1"/>
</dbReference>
<dbReference type="HAMAP" id="MF_01008">
    <property type="entry name" value="MraZ"/>
    <property type="match status" value="1"/>
</dbReference>
<dbReference type="InterPro" id="IPR003444">
    <property type="entry name" value="MraZ"/>
</dbReference>
<dbReference type="InterPro" id="IPR035644">
    <property type="entry name" value="MraZ_C"/>
</dbReference>
<dbReference type="InterPro" id="IPR020603">
    <property type="entry name" value="MraZ_dom"/>
</dbReference>
<dbReference type="InterPro" id="IPR035642">
    <property type="entry name" value="MraZ_N"/>
</dbReference>
<dbReference type="InterPro" id="IPR038619">
    <property type="entry name" value="MraZ_sf"/>
</dbReference>
<dbReference type="InterPro" id="IPR007159">
    <property type="entry name" value="SpoVT-AbrB_dom"/>
</dbReference>
<dbReference type="InterPro" id="IPR037914">
    <property type="entry name" value="SpoVT-AbrB_sf"/>
</dbReference>
<dbReference type="NCBIfam" id="TIGR00242">
    <property type="entry name" value="division/cell wall cluster transcriptional repressor MraZ"/>
    <property type="match status" value="1"/>
</dbReference>
<dbReference type="PANTHER" id="PTHR34701">
    <property type="entry name" value="TRANSCRIPTIONAL REGULATOR MRAZ"/>
    <property type="match status" value="1"/>
</dbReference>
<dbReference type="PANTHER" id="PTHR34701:SF1">
    <property type="entry name" value="TRANSCRIPTIONAL REGULATOR MRAZ"/>
    <property type="match status" value="1"/>
</dbReference>
<dbReference type="Pfam" id="PF02381">
    <property type="entry name" value="MraZ"/>
    <property type="match status" value="2"/>
</dbReference>
<dbReference type="SUPFAM" id="SSF89447">
    <property type="entry name" value="AbrB/MazE/MraZ-like"/>
    <property type="match status" value="1"/>
</dbReference>
<dbReference type="PROSITE" id="PS51740">
    <property type="entry name" value="SPOVT_ABRB"/>
    <property type="match status" value="2"/>
</dbReference>
<name>MRAZ_SALEP</name>
<gene>
    <name evidence="1" type="primary">mraZ</name>
    <name type="ordered locus">SEN0120</name>
</gene>
<feature type="chain" id="PRO_1000191328" description="Transcriptional regulator MraZ">
    <location>
        <begin position="1"/>
        <end position="152"/>
    </location>
</feature>
<feature type="domain" description="SpoVT-AbrB 1" evidence="2">
    <location>
        <begin position="5"/>
        <end position="52"/>
    </location>
</feature>
<feature type="domain" description="SpoVT-AbrB 2" evidence="2">
    <location>
        <begin position="81"/>
        <end position="124"/>
    </location>
</feature>
<comment type="function">
    <text evidence="1">Negatively regulates its own expression and that of the subsequent genes in the proximal part of the division and cell wall (dcw) gene cluster. Acts by binding directly to DNA. May also regulate the expression of genes outside the dcw cluster.</text>
</comment>
<comment type="subunit">
    <text evidence="1">Forms oligomers.</text>
</comment>
<comment type="subcellular location">
    <subcellularLocation>
        <location evidence="1">Cytoplasm</location>
        <location evidence="1">Nucleoid</location>
    </subcellularLocation>
</comment>
<comment type="similarity">
    <text evidence="1">Belongs to the MraZ family.</text>
</comment>
<sequence>MFRGATLVNLDSKGRLTVPTRYREQLIESATGQMVCTIDIHHPCLLLYPLPEWEIIEQKLSRLSSMNPVERRVQRLLLGHASECQMDGAGRLLIAPVLRQHAGLTKEVMLVGQFNKFELWDETTWYQQVKEDIDAEQSATETLSERLQDLSL</sequence>
<proteinExistence type="inferred from homology"/>
<accession>B5R2L5</accession>
<organism>
    <name type="scientific">Salmonella enteritidis PT4 (strain P125109)</name>
    <dbReference type="NCBI Taxonomy" id="550537"/>
    <lineage>
        <taxon>Bacteria</taxon>
        <taxon>Pseudomonadati</taxon>
        <taxon>Pseudomonadota</taxon>
        <taxon>Gammaproteobacteria</taxon>
        <taxon>Enterobacterales</taxon>
        <taxon>Enterobacteriaceae</taxon>
        <taxon>Salmonella</taxon>
    </lineage>
</organism>
<keyword id="KW-0963">Cytoplasm</keyword>
<keyword id="KW-0238">DNA-binding</keyword>
<keyword id="KW-0677">Repeat</keyword>
<keyword id="KW-0678">Repressor</keyword>
<keyword id="KW-0804">Transcription</keyword>
<keyword id="KW-0805">Transcription regulation</keyword>